<evidence type="ECO:0000255" key="1">
    <source>
        <dbReference type="HAMAP-Rule" id="MF_01549"/>
    </source>
</evidence>
<evidence type="ECO:0000305" key="2"/>
<name>DSRB_YERPE</name>
<proteinExistence type="inferred from homology"/>
<feature type="chain" id="PRO_0000201915" description="Protein DsrB">
    <location>
        <begin position="1"/>
        <end position="63"/>
    </location>
</feature>
<comment type="similarity">
    <text evidence="1">Belongs to the DsrB family.</text>
</comment>
<comment type="sequence caution" evidence="2">
    <conflict type="erroneous initiation">
        <sequence resource="EMBL-CDS" id="AAM85386"/>
    </conflict>
</comment>
<comment type="sequence caution" evidence="2">
    <conflict type="erroneous initiation">
        <sequence resource="EMBL-CDS" id="AAS62014"/>
    </conflict>
</comment>
<keyword id="KW-1185">Reference proteome</keyword>
<dbReference type="EMBL" id="AL590842">
    <property type="protein sequence ID" value="CAL20301.1"/>
    <property type="molecule type" value="Genomic_DNA"/>
</dbReference>
<dbReference type="EMBL" id="AE009952">
    <property type="protein sequence ID" value="AAM85386.1"/>
    <property type="status" value="ALT_INIT"/>
    <property type="molecule type" value="Genomic_DNA"/>
</dbReference>
<dbReference type="EMBL" id="AE017042">
    <property type="protein sequence ID" value="AAS62014.1"/>
    <property type="status" value="ALT_INIT"/>
    <property type="molecule type" value="Genomic_DNA"/>
</dbReference>
<dbReference type="PIR" id="AC0202">
    <property type="entry name" value="AC0202"/>
</dbReference>
<dbReference type="RefSeq" id="WP_002210892.1">
    <property type="nucleotide sequence ID" value="NZ_WUCM01000020.1"/>
</dbReference>
<dbReference type="RefSeq" id="YP_002346666.1">
    <property type="nucleotide sequence ID" value="NC_003143.1"/>
</dbReference>
<dbReference type="SMR" id="Q8ZFN8"/>
<dbReference type="PaxDb" id="214092-YPO1656"/>
<dbReference type="EnsemblBacteria" id="AAS62014">
    <property type="protein sequence ID" value="AAS62014"/>
    <property type="gene ID" value="YP_1787"/>
</dbReference>
<dbReference type="GeneID" id="96666536"/>
<dbReference type="KEGG" id="ype:YPO1656"/>
<dbReference type="KEGG" id="ypk:y1818"/>
<dbReference type="KEGG" id="ypm:YP_1787"/>
<dbReference type="PATRIC" id="fig|214092.21.peg.2002"/>
<dbReference type="eggNOG" id="ENOG5032ZW5">
    <property type="taxonomic scope" value="Bacteria"/>
</dbReference>
<dbReference type="HOGENOM" id="CLU_189289_0_0_6"/>
<dbReference type="OMA" id="IWFFNEL"/>
<dbReference type="Proteomes" id="UP000000815">
    <property type="component" value="Chromosome"/>
</dbReference>
<dbReference type="Proteomes" id="UP000001019">
    <property type="component" value="Chromosome"/>
</dbReference>
<dbReference type="Proteomes" id="UP000002490">
    <property type="component" value="Chromosome"/>
</dbReference>
<dbReference type="HAMAP" id="MF_01549">
    <property type="entry name" value="DsrB"/>
    <property type="match status" value="1"/>
</dbReference>
<dbReference type="InterPro" id="IPR019717">
    <property type="entry name" value="Dextransucrase_DSRB"/>
</dbReference>
<dbReference type="NCBIfam" id="NF007981">
    <property type="entry name" value="PRK10708.1"/>
    <property type="match status" value="1"/>
</dbReference>
<dbReference type="Pfam" id="PF10781">
    <property type="entry name" value="DSRB"/>
    <property type="match status" value="1"/>
</dbReference>
<sequence>MKVNDRVTVKTDGGPRREGVVLEVEEFSEGVMYLVSLADYPAGVWFFNEVDSQDGTFVEPLSQ</sequence>
<protein>
    <recommendedName>
        <fullName evidence="1">Protein DsrB</fullName>
    </recommendedName>
</protein>
<reference key="1">
    <citation type="journal article" date="2001" name="Nature">
        <title>Genome sequence of Yersinia pestis, the causative agent of plague.</title>
        <authorList>
            <person name="Parkhill J."/>
            <person name="Wren B.W."/>
            <person name="Thomson N.R."/>
            <person name="Titball R.W."/>
            <person name="Holden M.T.G."/>
            <person name="Prentice M.B."/>
            <person name="Sebaihia M."/>
            <person name="James K.D."/>
            <person name="Churcher C.M."/>
            <person name="Mungall K.L."/>
            <person name="Baker S."/>
            <person name="Basham D."/>
            <person name="Bentley S.D."/>
            <person name="Brooks K."/>
            <person name="Cerdeno-Tarraga A.-M."/>
            <person name="Chillingworth T."/>
            <person name="Cronin A."/>
            <person name="Davies R.M."/>
            <person name="Davis P."/>
            <person name="Dougan G."/>
            <person name="Feltwell T."/>
            <person name="Hamlin N."/>
            <person name="Holroyd S."/>
            <person name="Jagels K."/>
            <person name="Karlyshev A.V."/>
            <person name="Leather S."/>
            <person name="Moule S."/>
            <person name="Oyston P.C.F."/>
            <person name="Quail M.A."/>
            <person name="Rutherford K.M."/>
            <person name="Simmonds M."/>
            <person name="Skelton J."/>
            <person name="Stevens K."/>
            <person name="Whitehead S."/>
            <person name="Barrell B.G."/>
        </authorList>
    </citation>
    <scope>NUCLEOTIDE SEQUENCE [LARGE SCALE GENOMIC DNA]</scope>
    <source>
        <strain>CO-92 / Biovar Orientalis</strain>
    </source>
</reference>
<reference key="2">
    <citation type="journal article" date="2002" name="J. Bacteriol.">
        <title>Genome sequence of Yersinia pestis KIM.</title>
        <authorList>
            <person name="Deng W."/>
            <person name="Burland V."/>
            <person name="Plunkett G. III"/>
            <person name="Boutin A."/>
            <person name="Mayhew G.F."/>
            <person name="Liss P."/>
            <person name="Perna N.T."/>
            <person name="Rose D.J."/>
            <person name="Mau B."/>
            <person name="Zhou S."/>
            <person name="Schwartz D.C."/>
            <person name="Fetherston J.D."/>
            <person name="Lindler L.E."/>
            <person name="Brubaker R.R."/>
            <person name="Plano G.V."/>
            <person name="Straley S.C."/>
            <person name="McDonough K.A."/>
            <person name="Nilles M.L."/>
            <person name="Matson J.S."/>
            <person name="Blattner F.R."/>
            <person name="Perry R.D."/>
        </authorList>
    </citation>
    <scope>NUCLEOTIDE SEQUENCE [LARGE SCALE GENOMIC DNA]</scope>
    <source>
        <strain>KIM10+ / Biovar Mediaevalis</strain>
    </source>
</reference>
<reference key="3">
    <citation type="journal article" date="2004" name="DNA Res.">
        <title>Complete genome sequence of Yersinia pestis strain 91001, an isolate avirulent to humans.</title>
        <authorList>
            <person name="Song Y."/>
            <person name="Tong Z."/>
            <person name="Wang J."/>
            <person name="Wang L."/>
            <person name="Guo Z."/>
            <person name="Han Y."/>
            <person name="Zhang J."/>
            <person name="Pei D."/>
            <person name="Zhou D."/>
            <person name="Qin H."/>
            <person name="Pang X."/>
            <person name="Han Y."/>
            <person name="Zhai J."/>
            <person name="Li M."/>
            <person name="Cui B."/>
            <person name="Qi Z."/>
            <person name="Jin L."/>
            <person name="Dai R."/>
            <person name="Chen F."/>
            <person name="Li S."/>
            <person name="Ye C."/>
            <person name="Du Z."/>
            <person name="Lin W."/>
            <person name="Wang J."/>
            <person name="Yu J."/>
            <person name="Yang H."/>
            <person name="Wang J."/>
            <person name="Huang P."/>
            <person name="Yang R."/>
        </authorList>
    </citation>
    <scope>NUCLEOTIDE SEQUENCE [LARGE SCALE GENOMIC DNA]</scope>
    <source>
        <strain>91001 / Biovar Mediaevalis</strain>
    </source>
</reference>
<gene>
    <name evidence="1" type="primary">dsrB</name>
    <name type="ordered locus">YPO1656</name>
    <name type="ordered locus">y1818</name>
    <name type="ordered locus">YP_1787</name>
</gene>
<organism>
    <name type="scientific">Yersinia pestis</name>
    <dbReference type="NCBI Taxonomy" id="632"/>
    <lineage>
        <taxon>Bacteria</taxon>
        <taxon>Pseudomonadati</taxon>
        <taxon>Pseudomonadota</taxon>
        <taxon>Gammaproteobacteria</taxon>
        <taxon>Enterobacterales</taxon>
        <taxon>Yersiniaceae</taxon>
        <taxon>Yersinia</taxon>
    </lineage>
</organism>
<accession>Q8ZFN8</accession>
<accession>Q0WGC2</accession>
<accession>Q74UD9</accession>
<accession>Q8D0P6</accession>